<proteinExistence type="inferred from homology"/>
<comment type="function">
    <text evidence="1">Binds to 23S rRNA. Forms part of two intersubunit bridges in the 70S ribosome.</text>
</comment>
<comment type="subunit">
    <text evidence="1">Part of the 50S ribosomal subunit. Forms a cluster with proteins L3 and L19. In the 70S ribosome, L14 and L19 interact and together make contacts with the 16S rRNA in bridges B5 and B8.</text>
</comment>
<comment type="similarity">
    <text evidence="1">Belongs to the universal ribosomal protein uL14 family.</text>
</comment>
<organism>
    <name type="scientific">Pseudomonas putida (strain ATCC 47054 / DSM 6125 / CFBP 8728 / NCIMB 11950 / KT2440)</name>
    <dbReference type="NCBI Taxonomy" id="160488"/>
    <lineage>
        <taxon>Bacteria</taxon>
        <taxon>Pseudomonadati</taxon>
        <taxon>Pseudomonadota</taxon>
        <taxon>Gammaproteobacteria</taxon>
        <taxon>Pseudomonadales</taxon>
        <taxon>Pseudomonadaceae</taxon>
        <taxon>Pseudomonas</taxon>
    </lineage>
</organism>
<accession>Q88QM5</accession>
<keyword id="KW-1185">Reference proteome</keyword>
<keyword id="KW-0687">Ribonucleoprotein</keyword>
<keyword id="KW-0689">Ribosomal protein</keyword>
<keyword id="KW-0694">RNA-binding</keyword>
<keyword id="KW-0699">rRNA-binding</keyword>
<reference key="1">
    <citation type="journal article" date="2002" name="Environ. Microbiol.">
        <title>Complete genome sequence and comparative analysis of the metabolically versatile Pseudomonas putida KT2440.</title>
        <authorList>
            <person name="Nelson K.E."/>
            <person name="Weinel C."/>
            <person name="Paulsen I.T."/>
            <person name="Dodson R.J."/>
            <person name="Hilbert H."/>
            <person name="Martins dos Santos V.A.P."/>
            <person name="Fouts D.E."/>
            <person name="Gill S.R."/>
            <person name="Pop M."/>
            <person name="Holmes M."/>
            <person name="Brinkac L.M."/>
            <person name="Beanan M.J."/>
            <person name="DeBoy R.T."/>
            <person name="Daugherty S.C."/>
            <person name="Kolonay J.F."/>
            <person name="Madupu R."/>
            <person name="Nelson W.C."/>
            <person name="White O."/>
            <person name="Peterson J.D."/>
            <person name="Khouri H.M."/>
            <person name="Hance I."/>
            <person name="Chris Lee P."/>
            <person name="Holtzapple E.K."/>
            <person name="Scanlan D."/>
            <person name="Tran K."/>
            <person name="Moazzez A."/>
            <person name="Utterback T.R."/>
            <person name="Rizzo M."/>
            <person name="Lee K."/>
            <person name="Kosack D."/>
            <person name="Moestl D."/>
            <person name="Wedler H."/>
            <person name="Lauber J."/>
            <person name="Stjepandic D."/>
            <person name="Hoheisel J."/>
            <person name="Straetz M."/>
            <person name="Heim S."/>
            <person name="Kiewitz C."/>
            <person name="Eisen J.A."/>
            <person name="Timmis K.N."/>
            <person name="Duesterhoeft A."/>
            <person name="Tuemmler B."/>
            <person name="Fraser C.M."/>
        </authorList>
    </citation>
    <scope>NUCLEOTIDE SEQUENCE [LARGE SCALE GENOMIC DNA]</scope>
    <source>
        <strain>ATCC 47054 / DSM 6125 / CFBP 8728 / NCIMB 11950 / KT2440</strain>
    </source>
</reference>
<gene>
    <name evidence="1" type="primary">rplN</name>
    <name type="ordered locus">PP_0464</name>
</gene>
<name>RL14_PSEPK</name>
<sequence>MIQTQSMLDVADNSGARRVMCIKVLGGSHRRYAGIGDIIKVTVKEAIPRGKVKKGQVMTAVVVRTRHGVRRADGSIIRFDGNAAVLLNNKQEPIGTRIFGPVTRELRTEKFMKIVSLAPEVL</sequence>
<protein>
    <recommendedName>
        <fullName evidence="1">Large ribosomal subunit protein uL14</fullName>
    </recommendedName>
    <alternativeName>
        <fullName evidence="2">50S ribosomal protein L14</fullName>
    </alternativeName>
</protein>
<evidence type="ECO:0000255" key="1">
    <source>
        <dbReference type="HAMAP-Rule" id="MF_01367"/>
    </source>
</evidence>
<evidence type="ECO:0000305" key="2"/>
<dbReference type="EMBL" id="AE015451">
    <property type="protein sequence ID" value="AAN66094.1"/>
    <property type="molecule type" value="Genomic_DNA"/>
</dbReference>
<dbReference type="RefSeq" id="NP_742630.1">
    <property type="nucleotide sequence ID" value="NC_002947.4"/>
</dbReference>
<dbReference type="RefSeq" id="WP_002555479.1">
    <property type="nucleotide sequence ID" value="NZ_CP169744.1"/>
</dbReference>
<dbReference type="SMR" id="Q88QM5"/>
<dbReference type="STRING" id="160488.PP_0464"/>
<dbReference type="PaxDb" id="160488-PP_0464"/>
<dbReference type="GeneID" id="98285428"/>
<dbReference type="KEGG" id="ppu:PP_0464"/>
<dbReference type="PATRIC" id="fig|160488.4.peg.496"/>
<dbReference type="eggNOG" id="COG0093">
    <property type="taxonomic scope" value="Bacteria"/>
</dbReference>
<dbReference type="HOGENOM" id="CLU_095071_2_1_6"/>
<dbReference type="OrthoDB" id="9806379at2"/>
<dbReference type="PhylomeDB" id="Q88QM5"/>
<dbReference type="BioCyc" id="PPUT160488:G1G01-510-MONOMER"/>
<dbReference type="PRO" id="PR:Q88QM5"/>
<dbReference type="Proteomes" id="UP000000556">
    <property type="component" value="Chromosome"/>
</dbReference>
<dbReference type="GO" id="GO:0022625">
    <property type="term" value="C:cytosolic large ribosomal subunit"/>
    <property type="evidence" value="ECO:0007669"/>
    <property type="project" value="TreeGrafter"/>
</dbReference>
<dbReference type="GO" id="GO:0070180">
    <property type="term" value="F:large ribosomal subunit rRNA binding"/>
    <property type="evidence" value="ECO:0007669"/>
    <property type="project" value="TreeGrafter"/>
</dbReference>
<dbReference type="GO" id="GO:0003735">
    <property type="term" value="F:structural constituent of ribosome"/>
    <property type="evidence" value="ECO:0007669"/>
    <property type="project" value="InterPro"/>
</dbReference>
<dbReference type="GO" id="GO:0006412">
    <property type="term" value="P:translation"/>
    <property type="evidence" value="ECO:0007669"/>
    <property type="project" value="UniProtKB-UniRule"/>
</dbReference>
<dbReference type="CDD" id="cd00337">
    <property type="entry name" value="Ribosomal_uL14"/>
    <property type="match status" value="1"/>
</dbReference>
<dbReference type="FunFam" id="2.40.150.20:FF:000001">
    <property type="entry name" value="50S ribosomal protein L14"/>
    <property type="match status" value="1"/>
</dbReference>
<dbReference type="Gene3D" id="2.40.150.20">
    <property type="entry name" value="Ribosomal protein L14"/>
    <property type="match status" value="1"/>
</dbReference>
<dbReference type="HAMAP" id="MF_01367">
    <property type="entry name" value="Ribosomal_uL14"/>
    <property type="match status" value="1"/>
</dbReference>
<dbReference type="InterPro" id="IPR000218">
    <property type="entry name" value="Ribosomal_uL14"/>
</dbReference>
<dbReference type="InterPro" id="IPR005745">
    <property type="entry name" value="Ribosomal_uL14_bac-type"/>
</dbReference>
<dbReference type="InterPro" id="IPR019972">
    <property type="entry name" value="Ribosomal_uL14_CS"/>
</dbReference>
<dbReference type="InterPro" id="IPR036853">
    <property type="entry name" value="Ribosomal_uL14_sf"/>
</dbReference>
<dbReference type="NCBIfam" id="TIGR01067">
    <property type="entry name" value="rplN_bact"/>
    <property type="match status" value="1"/>
</dbReference>
<dbReference type="PANTHER" id="PTHR11761">
    <property type="entry name" value="50S/60S RIBOSOMAL PROTEIN L14/L23"/>
    <property type="match status" value="1"/>
</dbReference>
<dbReference type="PANTHER" id="PTHR11761:SF3">
    <property type="entry name" value="LARGE RIBOSOMAL SUBUNIT PROTEIN UL14M"/>
    <property type="match status" value="1"/>
</dbReference>
<dbReference type="Pfam" id="PF00238">
    <property type="entry name" value="Ribosomal_L14"/>
    <property type="match status" value="1"/>
</dbReference>
<dbReference type="SMART" id="SM01374">
    <property type="entry name" value="Ribosomal_L14"/>
    <property type="match status" value="1"/>
</dbReference>
<dbReference type="SUPFAM" id="SSF50193">
    <property type="entry name" value="Ribosomal protein L14"/>
    <property type="match status" value="1"/>
</dbReference>
<dbReference type="PROSITE" id="PS00049">
    <property type="entry name" value="RIBOSOMAL_L14"/>
    <property type="match status" value="1"/>
</dbReference>
<feature type="chain" id="PRO_0000266528" description="Large ribosomal subunit protein uL14">
    <location>
        <begin position="1"/>
        <end position="122"/>
    </location>
</feature>